<accession>C4XPA8</accession>
<protein>
    <recommendedName>
        <fullName evidence="1">2-isopropylmalate synthase</fullName>
        <ecNumber evidence="1">2.3.3.13</ecNumber>
    </recommendedName>
    <alternativeName>
        <fullName evidence="1">Alpha-IPM synthase</fullName>
    </alternativeName>
    <alternativeName>
        <fullName evidence="1">Alpha-isopropylmalate synthase</fullName>
    </alternativeName>
</protein>
<feature type="chain" id="PRO_0000406894" description="2-isopropylmalate synthase">
    <location>
        <begin position="1"/>
        <end position="513"/>
    </location>
</feature>
<feature type="domain" description="Pyruvate carboxyltransferase" evidence="1">
    <location>
        <begin position="7"/>
        <end position="269"/>
    </location>
</feature>
<feature type="region of interest" description="Regulatory domain" evidence="1">
    <location>
        <begin position="393"/>
        <end position="513"/>
    </location>
</feature>
<feature type="binding site" evidence="1">
    <location>
        <position position="16"/>
    </location>
    <ligand>
        <name>Mn(2+)</name>
        <dbReference type="ChEBI" id="CHEBI:29035"/>
    </ligand>
</feature>
<feature type="binding site" evidence="1">
    <location>
        <position position="204"/>
    </location>
    <ligand>
        <name>Mn(2+)</name>
        <dbReference type="ChEBI" id="CHEBI:29035"/>
    </ligand>
</feature>
<feature type="binding site" evidence="1">
    <location>
        <position position="206"/>
    </location>
    <ligand>
        <name>Mn(2+)</name>
        <dbReference type="ChEBI" id="CHEBI:29035"/>
    </ligand>
</feature>
<feature type="binding site" evidence="1">
    <location>
        <position position="240"/>
    </location>
    <ligand>
        <name>Mn(2+)</name>
        <dbReference type="ChEBI" id="CHEBI:29035"/>
    </ligand>
</feature>
<dbReference type="EC" id="2.3.3.13" evidence="1"/>
<dbReference type="EMBL" id="AP010904">
    <property type="protein sequence ID" value="BAH75089.1"/>
    <property type="molecule type" value="Genomic_DNA"/>
</dbReference>
<dbReference type="RefSeq" id="WP_015860294.1">
    <property type="nucleotide sequence ID" value="NC_012796.1"/>
</dbReference>
<dbReference type="SMR" id="C4XPA8"/>
<dbReference type="STRING" id="573370.DMR_15980"/>
<dbReference type="KEGG" id="dma:DMR_15980"/>
<dbReference type="eggNOG" id="COG0119">
    <property type="taxonomic scope" value="Bacteria"/>
</dbReference>
<dbReference type="HOGENOM" id="CLU_022158_0_1_7"/>
<dbReference type="OrthoDB" id="9803573at2"/>
<dbReference type="UniPathway" id="UPA00048">
    <property type="reaction ID" value="UER00070"/>
</dbReference>
<dbReference type="Proteomes" id="UP000009071">
    <property type="component" value="Chromosome"/>
</dbReference>
<dbReference type="GO" id="GO:0005737">
    <property type="term" value="C:cytoplasm"/>
    <property type="evidence" value="ECO:0007669"/>
    <property type="project" value="UniProtKB-SubCell"/>
</dbReference>
<dbReference type="GO" id="GO:0003852">
    <property type="term" value="F:2-isopropylmalate synthase activity"/>
    <property type="evidence" value="ECO:0007669"/>
    <property type="project" value="UniProtKB-UniRule"/>
</dbReference>
<dbReference type="GO" id="GO:0003985">
    <property type="term" value="F:acetyl-CoA C-acetyltransferase activity"/>
    <property type="evidence" value="ECO:0007669"/>
    <property type="project" value="UniProtKB-UniRule"/>
</dbReference>
<dbReference type="GO" id="GO:0030145">
    <property type="term" value="F:manganese ion binding"/>
    <property type="evidence" value="ECO:0007669"/>
    <property type="project" value="UniProtKB-UniRule"/>
</dbReference>
<dbReference type="GO" id="GO:0009098">
    <property type="term" value="P:L-leucine biosynthetic process"/>
    <property type="evidence" value="ECO:0007669"/>
    <property type="project" value="UniProtKB-UniRule"/>
</dbReference>
<dbReference type="CDD" id="cd07940">
    <property type="entry name" value="DRE_TIM_IPMS"/>
    <property type="match status" value="1"/>
</dbReference>
<dbReference type="FunFam" id="1.10.238.260:FF:000001">
    <property type="entry name" value="2-isopropylmalate synthase"/>
    <property type="match status" value="1"/>
</dbReference>
<dbReference type="FunFam" id="3.20.20.70:FF:000010">
    <property type="entry name" value="2-isopropylmalate synthase"/>
    <property type="match status" value="1"/>
</dbReference>
<dbReference type="FunFam" id="3.30.160.270:FF:000003">
    <property type="entry name" value="2-isopropylmalate synthase"/>
    <property type="match status" value="1"/>
</dbReference>
<dbReference type="Gene3D" id="1.10.238.260">
    <property type="match status" value="1"/>
</dbReference>
<dbReference type="Gene3D" id="3.30.160.270">
    <property type="match status" value="1"/>
</dbReference>
<dbReference type="Gene3D" id="3.20.20.70">
    <property type="entry name" value="Aldolase class I"/>
    <property type="match status" value="1"/>
</dbReference>
<dbReference type="HAMAP" id="MF_01025">
    <property type="entry name" value="LeuA_type1"/>
    <property type="match status" value="1"/>
</dbReference>
<dbReference type="InterPro" id="IPR050073">
    <property type="entry name" value="2-IPM_HCS-like"/>
</dbReference>
<dbReference type="InterPro" id="IPR013709">
    <property type="entry name" value="2-isopropylmalate_synth_dimer"/>
</dbReference>
<dbReference type="InterPro" id="IPR002034">
    <property type="entry name" value="AIPM/Hcit_synth_CS"/>
</dbReference>
<dbReference type="InterPro" id="IPR013785">
    <property type="entry name" value="Aldolase_TIM"/>
</dbReference>
<dbReference type="InterPro" id="IPR054691">
    <property type="entry name" value="LeuA/HCS_post-cat"/>
</dbReference>
<dbReference type="InterPro" id="IPR036230">
    <property type="entry name" value="LeuA_allosteric_dom_sf"/>
</dbReference>
<dbReference type="InterPro" id="IPR005671">
    <property type="entry name" value="LeuA_bact_synth"/>
</dbReference>
<dbReference type="InterPro" id="IPR000891">
    <property type="entry name" value="PYR_CT"/>
</dbReference>
<dbReference type="NCBIfam" id="TIGR00973">
    <property type="entry name" value="leuA_bact"/>
    <property type="match status" value="1"/>
</dbReference>
<dbReference type="NCBIfam" id="NF002086">
    <property type="entry name" value="PRK00915.1-3"/>
    <property type="match status" value="1"/>
</dbReference>
<dbReference type="PANTHER" id="PTHR10277:SF9">
    <property type="entry name" value="2-ISOPROPYLMALATE SYNTHASE 1, CHLOROPLASTIC-RELATED"/>
    <property type="match status" value="1"/>
</dbReference>
<dbReference type="PANTHER" id="PTHR10277">
    <property type="entry name" value="HOMOCITRATE SYNTHASE-RELATED"/>
    <property type="match status" value="1"/>
</dbReference>
<dbReference type="Pfam" id="PF22617">
    <property type="entry name" value="HCS_D2"/>
    <property type="match status" value="1"/>
</dbReference>
<dbReference type="Pfam" id="PF00682">
    <property type="entry name" value="HMGL-like"/>
    <property type="match status" value="1"/>
</dbReference>
<dbReference type="Pfam" id="PF08502">
    <property type="entry name" value="LeuA_dimer"/>
    <property type="match status" value="1"/>
</dbReference>
<dbReference type="SMART" id="SM00917">
    <property type="entry name" value="LeuA_dimer"/>
    <property type="match status" value="1"/>
</dbReference>
<dbReference type="SUPFAM" id="SSF110921">
    <property type="entry name" value="2-isopropylmalate synthase LeuA, allosteric (dimerisation) domain"/>
    <property type="match status" value="1"/>
</dbReference>
<dbReference type="SUPFAM" id="SSF51569">
    <property type="entry name" value="Aldolase"/>
    <property type="match status" value="1"/>
</dbReference>
<dbReference type="PROSITE" id="PS00815">
    <property type="entry name" value="AIPM_HOMOCIT_SYNTH_1"/>
    <property type="match status" value="1"/>
</dbReference>
<dbReference type="PROSITE" id="PS00816">
    <property type="entry name" value="AIPM_HOMOCIT_SYNTH_2"/>
    <property type="match status" value="1"/>
</dbReference>
<dbReference type="PROSITE" id="PS50991">
    <property type="entry name" value="PYR_CT"/>
    <property type="match status" value="1"/>
</dbReference>
<proteinExistence type="inferred from homology"/>
<reference key="1">
    <citation type="journal article" date="2009" name="Genome Res.">
        <title>Whole genome sequence of Desulfovibrio magneticus strain RS-1 revealed common gene clusters in magnetotactic bacteria.</title>
        <authorList>
            <person name="Nakazawa H."/>
            <person name="Arakaki A."/>
            <person name="Narita-Yamada S."/>
            <person name="Yashiro I."/>
            <person name="Jinno K."/>
            <person name="Aoki N."/>
            <person name="Tsuruyama A."/>
            <person name="Okamura Y."/>
            <person name="Tanikawa S."/>
            <person name="Fujita N."/>
            <person name="Takeyama H."/>
            <person name="Matsunaga T."/>
        </authorList>
    </citation>
    <scope>NUCLEOTIDE SEQUENCE [LARGE SCALE GENOMIC DNA]</scope>
    <source>
        <strain>ATCC 700980 / DSM 13731 / RS-1</strain>
    </source>
</reference>
<gene>
    <name evidence="1" type="primary">leuA</name>
    <name type="ordered locus">DMR_15980</name>
</gene>
<sequence length="513" mass="55331">MSDDNRVYIFDTTLRDGEQSPGATMTREEKVRMARQLETLGVDIIEAGFPAASEGDFQAVSAIAAAVKTPVVAALCRALASDIDRGFEAIKGAQRRRIHTFLATSELHMQHKLNKTPTQVLDMIEAAVSHAASKGVEVQFSAEDASRSEPAFLVAACERAINAGATILNIPDTVGYAQPAEFAELIRHLMTTVRGAGGVTFAVHCHNDLGLAVANTLAALHAGARQAEVTLSGIGERAGNASLEQVVMGLNTRPNYYNLTTGIVTEELFPSCRRLSGIIGQPIPPYAPIMGRNAFAHESGIHQHGVLKDRRTYEIMTAESIGRKGAVVVLGKHSGRHALDAKVKELGYALNDEELLVVFVAVKQLADRKQRILDEDIEALILEKVLRRPDRYALQFLSVHCGNVELAPFAVVEMQVEGQTVRHYSAGSGPVDAVFNAVCQAVGRKPDLEEYQINAITGGTDAQGEVTVRIKDGTATTVGRGVHDDVIMASTLAFINALNRLAKKEEERTCPQL</sequence>
<comment type="function">
    <text evidence="1">Catalyzes the condensation of the acetyl group of acetyl-CoA with 3-methyl-2-oxobutanoate (2-ketoisovalerate) to form 3-carboxy-3-hydroxy-4-methylpentanoate (2-isopropylmalate).</text>
</comment>
<comment type="catalytic activity">
    <reaction evidence="1">
        <text>3-methyl-2-oxobutanoate + acetyl-CoA + H2O = (2S)-2-isopropylmalate + CoA + H(+)</text>
        <dbReference type="Rhea" id="RHEA:21524"/>
        <dbReference type="ChEBI" id="CHEBI:1178"/>
        <dbReference type="ChEBI" id="CHEBI:11851"/>
        <dbReference type="ChEBI" id="CHEBI:15377"/>
        <dbReference type="ChEBI" id="CHEBI:15378"/>
        <dbReference type="ChEBI" id="CHEBI:57287"/>
        <dbReference type="ChEBI" id="CHEBI:57288"/>
        <dbReference type="EC" id="2.3.3.13"/>
    </reaction>
</comment>
<comment type="cofactor">
    <cofactor evidence="1">
        <name>Mn(2+)</name>
        <dbReference type="ChEBI" id="CHEBI:29035"/>
    </cofactor>
</comment>
<comment type="pathway">
    <text evidence="1">Amino-acid biosynthesis; L-leucine biosynthesis; L-leucine from 3-methyl-2-oxobutanoate: step 1/4.</text>
</comment>
<comment type="subunit">
    <text evidence="1">Homodimer.</text>
</comment>
<comment type="subcellular location">
    <subcellularLocation>
        <location evidence="1">Cytoplasm</location>
    </subcellularLocation>
</comment>
<comment type="similarity">
    <text evidence="1">Belongs to the alpha-IPM synthase/homocitrate synthase family. LeuA type 1 subfamily.</text>
</comment>
<evidence type="ECO:0000255" key="1">
    <source>
        <dbReference type="HAMAP-Rule" id="MF_01025"/>
    </source>
</evidence>
<name>LEU1_SOLM1</name>
<keyword id="KW-0028">Amino-acid biosynthesis</keyword>
<keyword id="KW-0100">Branched-chain amino acid biosynthesis</keyword>
<keyword id="KW-0963">Cytoplasm</keyword>
<keyword id="KW-0432">Leucine biosynthesis</keyword>
<keyword id="KW-0464">Manganese</keyword>
<keyword id="KW-0479">Metal-binding</keyword>
<keyword id="KW-0808">Transferase</keyword>
<organism>
    <name type="scientific">Solidesulfovibrio magneticus (strain ATCC 700980 / DSM 13731 / RS-1)</name>
    <name type="common">Desulfovibrio magneticus</name>
    <dbReference type="NCBI Taxonomy" id="573370"/>
    <lineage>
        <taxon>Bacteria</taxon>
        <taxon>Pseudomonadati</taxon>
        <taxon>Thermodesulfobacteriota</taxon>
        <taxon>Desulfovibrionia</taxon>
        <taxon>Desulfovibrionales</taxon>
        <taxon>Desulfovibrionaceae</taxon>
        <taxon>Solidesulfovibrio</taxon>
    </lineage>
</organism>